<feature type="chain" id="PRO_0000302144" description="Large ribosomal subunit protein bL36">
    <location>
        <begin position="1"/>
        <end position="37"/>
    </location>
</feature>
<accession>A0LRP4</accession>
<gene>
    <name evidence="1" type="primary">rpmJ</name>
    <name type="ordered locus">Acel_0330</name>
</gene>
<evidence type="ECO:0000255" key="1">
    <source>
        <dbReference type="HAMAP-Rule" id="MF_00251"/>
    </source>
</evidence>
<evidence type="ECO:0000305" key="2"/>
<proteinExistence type="inferred from homology"/>
<dbReference type="EMBL" id="CP000481">
    <property type="protein sequence ID" value="ABK52104.1"/>
    <property type="molecule type" value="Genomic_DNA"/>
</dbReference>
<dbReference type="RefSeq" id="WP_011719167.1">
    <property type="nucleotide sequence ID" value="NC_008578.1"/>
</dbReference>
<dbReference type="SMR" id="A0LRP4"/>
<dbReference type="FunCoup" id="A0LRP4">
    <property type="interactions" value="68"/>
</dbReference>
<dbReference type="STRING" id="351607.Acel_0330"/>
<dbReference type="KEGG" id="ace:Acel_0330"/>
<dbReference type="eggNOG" id="COG0257">
    <property type="taxonomic scope" value="Bacteria"/>
</dbReference>
<dbReference type="HOGENOM" id="CLU_135723_6_2_11"/>
<dbReference type="InParanoid" id="A0LRP4"/>
<dbReference type="OrthoDB" id="9802520at2"/>
<dbReference type="Proteomes" id="UP000008221">
    <property type="component" value="Chromosome"/>
</dbReference>
<dbReference type="GO" id="GO:0005737">
    <property type="term" value="C:cytoplasm"/>
    <property type="evidence" value="ECO:0007669"/>
    <property type="project" value="UniProtKB-ARBA"/>
</dbReference>
<dbReference type="GO" id="GO:1990904">
    <property type="term" value="C:ribonucleoprotein complex"/>
    <property type="evidence" value="ECO:0007669"/>
    <property type="project" value="UniProtKB-KW"/>
</dbReference>
<dbReference type="GO" id="GO:0005840">
    <property type="term" value="C:ribosome"/>
    <property type="evidence" value="ECO:0007669"/>
    <property type="project" value="UniProtKB-KW"/>
</dbReference>
<dbReference type="GO" id="GO:0003735">
    <property type="term" value="F:structural constituent of ribosome"/>
    <property type="evidence" value="ECO:0007669"/>
    <property type="project" value="InterPro"/>
</dbReference>
<dbReference type="GO" id="GO:0006412">
    <property type="term" value="P:translation"/>
    <property type="evidence" value="ECO:0007669"/>
    <property type="project" value="UniProtKB-UniRule"/>
</dbReference>
<dbReference type="HAMAP" id="MF_00251">
    <property type="entry name" value="Ribosomal_bL36"/>
    <property type="match status" value="1"/>
</dbReference>
<dbReference type="InterPro" id="IPR000473">
    <property type="entry name" value="Ribosomal_bL36"/>
</dbReference>
<dbReference type="InterPro" id="IPR035977">
    <property type="entry name" value="Ribosomal_bL36_sp"/>
</dbReference>
<dbReference type="NCBIfam" id="TIGR01022">
    <property type="entry name" value="rpmJ_bact"/>
    <property type="match status" value="1"/>
</dbReference>
<dbReference type="PANTHER" id="PTHR42888">
    <property type="entry name" value="50S RIBOSOMAL PROTEIN L36, CHLOROPLASTIC"/>
    <property type="match status" value="1"/>
</dbReference>
<dbReference type="PANTHER" id="PTHR42888:SF1">
    <property type="entry name" value="LARGE RIBOSOMAL SUBUNIT PROTEIN BL36C"/>
    <property type="match status" value="1"/>
</dbReference>
<dbReference type="Pfam" id="PF00444">
    <property type="entry name" value="Ribosomal_L36"/>
    <property type="match status" value="1"/>
</dbReference>
<dbReference type="SUPFAM" id="SSF57840">
    <property type="entry name" value="Ribosomal protein L36"/>
    <property type="match status" value="1"/>
</dbReference>
<dbReference type="PROSITE" id="PS00828">
    <property type="entry name" value="RIBOSOMAL_L36"/>
    <property type="match status" value="1"/>
</dbReference>
<reference key="1">
    <citation type="journal article" date="2009" name="Genome Res.">
        <title>Complete genome of the cellulolytic thermophile Acidothermus cellulolyticus 11B provides insights into its ecophysiological and evolutionary adaptations.</title>
        <authorList>
            <person name="Barabote R.D."/>
            <person name="Xie G."/>
            <person name="Leu D.H."/>
            <person name="Normand P."/>
            <person name="Necsulea A."/>
            <person name="Daubin V."/>
            <person name="Medigue C."/>
            <person name="Adney W.S."/>
            <person name="Xu X.C."/>
            <person name="Lapidus A."/>
            <person name="Parales R.E."/>
            <person name="Detter C."/>
            <person name="Pujic P."/>
            <person name="Bruce D."/>
            <person name="Lavire C."/>
            <person name="Challacombe J.F."/>
            <person name="Brettin T.S."/>
            <person name="Berry A.M."/>
        </authorList>
    </citation>
    <scope>NUCLEOTIDE SEQUENCE [LARGE SCALE GENOMIC DNA]</scope>
    <source>
        <strain>ATCC 43068 / DSM 8971 / 11B</strain>
    </source>
</reference>
<keyword id="KW-1185">Reference proteome</keyword>
<keyword id="KW-0687">Ribonucleoprotein</keyword>
<keyword id="KW-0689">Ribosomal protein</keyword>
<protein>
    <recommendedName>
        <fullName evidence="1">Large ribosomal subunit protein bL36</fullName>
    </recommendedName>
    <alternativeName>
        <fullName evidence="2">50S ribosomal protein L36</fullName>
    </alternativeName>
</protein>
<organism>
    <name type="scientific">Acidothermus cellulolyticus (strain ATCC 43068 / DSM 8971 / 11B)</name>
    <dbReference type="NCBI Taxonomy" id="351607"/>
    <lineage>
        <taxon>Bacteria</taxon>
        <taxon>Bacillati</taxon>
        <taxon>Actinomycetota</taxon>
        <taxon>Actinomycetes</taxon>
        <taxon>Acidothermales</taxon>
        <taxon>Acidothermaceae</taxon>
        <taxon>Acidothermus</taxon>
    </lineage>
</organism>
<name>RL36_ACIC1</name>
<comment type="similarity">
    <text evidence="1">Belongs to the bacterial ribosomal protein bL36 family.</text>
</comment>
<sequence>MKVKPSVKKICDKCKVIRRHGRVMVICQNLRHKQRQG</sequence>